<gene>
    <name evidence="1" type="primary">hisI</name>
    <name type="ordered locus">Smed_1048</name>
</gene>
<reference key="1">
    <citation type="submission" date="2007-06" db="EMBL/GenBank/DDBJ databases">
        <title>Complete sequence of Sinorhizobium medicae WSM419 chromosome.</title>
        <authorList>
            <consortium name="US DOE Joint Genome Institute"/>
            <person name="Copeland A."/>
            <person name="Lucas S."/>
            <person name="Lapidus A."/>
            <person name="Barry K."/>
            <person name="Glavina del Rio T."/>
            <person name="Dalin E."/>
            <person name="Tice H."/>
            <person name="Pitluck S."/>
            <person name="Chain P."/>
            <person name="Malfatti S."/>
            <person name="Shin M."/>
            <person name="Vergez L."/>
            <person name="Schmutz J."/>
            <person name="Larimer F."/>
            <person name="Land M."/>
            <person name="Hauser L."/>
            <person name="Kyrpides N."/>
            <person name="Mikhailova N."/>
            <person name="Reeve W.G."/>
            <person name="Richardson P."/>
        </authorList>
    </citation>
    <scope>NUCLEOTIDE SEQUENCE [LARGE SCALE GENOMIC DNA]</scope>
    <source>
        <strain>WSM419</strain>
    </source>
</reference>
<protein>
    <recommendedName>
        <fullName evidence="1">Phosphoribosyl-AMP cyclohydrolase</fullName>
        <shortName evidence="1">PRA-CH</shortName>
        <ecNumber evidence="1">3.5.4.19</ecNumber>
    </recommendedName>
</protein>
<comment type="function">
    <text evidence="1">Catalyzes the hydrolysis of the adenine ring of phosphoribosyl-AMP.</text>
</comment>
<comment type="catalytic activity">
    <reaction evidence="1">
        <text>1-(5-phospho-beta-D-ribosyl)-5'-AMP + H2O = 1-(5-phospho-beta-D-ribosyl)-5-[(5-phospho-beta-D-ribosylamino)methylideneamino]imidazole-4-carboxamide</text>
        <dbReference type="Rhea" id="RHEA:20049"/>
        <dbReference type="ChEBI" id="CHEBI:15377"/>
        <dbReference type="ChEBI" id="CHEBI:58435"/>
        <dbReference type="ChEBI" id="CHEBI:59457"/>
        <dbReference type="EC" id="3.5.4.19"/>
    </reaction>
</comment>
<comment type="cofactor">
    <cofactor evidence="1">
        <name>Mg(2+)</name>
        <dbReference type="ChEBI" id="CHEBI:18420"/>
    </cofactor>
    <text evidence="1">Binds 1 Mg(2+) ion per subunit.</text>
</comment>
<comment type="cofactor">
    <cofactor evidence="1">
        <name>Zn(2+)</name>
        <dbReference type="ChEBI" id="CHEBI:29105"/>
    </cofactor>
    <text evidence="1">Binds 1 zinc ion per subunit.</text>
</comment>
<comment type="pathway">
    <text evidence="1">Amino-acid biosynthesis; L-histidine biosynthesis; L-histidine from 5-phospho-alpha-D-ribose 1-diphosphate: step 3/9.</text>
</comment>
<comment type="subunit">
    <text evidence="1">Homodimer.</text>
</comment>
<comment type="subcellular location">
    <subcellularLocation>
        <location evidence="1">Cytoplasm</location>
    </subcellularLocation>
</comment>
<comment type="similarity">
    <text evidence="1">Belongs to the PRA-CH family.</text>
</comment>
<sequence length="151" mass="16692">MMTLTFASPPQNKSDLETGPAFTPRFDEKGLITAVVTDAGDGALLMVAHMNAEALALTLETGVAHYYSRSRRRLWKKGESSGNVQAVREIRTDCDQDAIWLKVSVAGHDATCHTGRRSCFYRTVGVDEGQAKLVITDDERHFDLKQVYAES</sequence>
<keyword id="KW-0028">Amino-acid biosynthesis</keyword>
<keyword id="KW-0963">Cytoplasm</keyword>
<keyword id="KW-0368">Histidine biosynthesis</keyword>
<keyword id="KW-0378">Hydrolase</keyword>
<keyword id="KW-0460">Magnesium</keyword>
<keyword id="KW-0479">Metal-binding</keyword>
<keyword id="KW-0862">Zinc</keyword>
<feature type="chain" id="PRO_0000319719" description="Phosphoribosyl-AMP cyclohydrolase">
    <location>
        <begin position="1"/>
        <end position="151"/>
    </location>
</feature>
<feature type="region of interest" description="Disordered" evidence="2">
    <location>
        <begin position="1"/>
        <end position="20"/>
    </location>
</feature>
<feature type="compositionally biased region" description="Polar residues" evidence="2">
    <location>
        <begin position="1"/>
        <end position="13"/>
    </location>
</feature>
<feature type="binding site" evidence="1">
    <location>
        <position position="93"/>
    </location>
    <ligand>
        <name>Mg(2+)</name>
        <dbReference type="ChEBI" id="CHEBI:18420"/>
    </ligand>
</feature>
<feature type="binding site" evidence="1">
    <location>
        <position position="94"/>
    </location>
    <ligand>
        <name>Zn(2+)</name>
        <dbReference type="ChEBI" id="CHEBI:29105"/>
        <note>ligand shared between dimeric partners</note>
    </ligand>
</feature>
<feature type="binding site" evidence="1">
    <location>
        <position position="95"/>
    </location>
    <ligand>
        <name>Mg(2+)</name>
        <dbReference type="ChEBI" id="CHEBI:18420"/>
    </ligand>
</feature>
<feature type="binding site" evidence="1">
    <location>
        <position position="97"/>
    </location>
    <ligand>
        <name>Mg(2+)</name>
        <dbReference type="ChEBI" id="CHEBI:18420"/>
    </ligand>
</feature>
<feature type="binding site" evidence="1">
    <location>
        <position position="112"/>
    </location>
    <ligand>
        <name>Zn(2+)</name>
        <dbReference type="ChEBI" id="CHEBI:29105"/>
        <note>ligand shared between dimeric partners</note>
    </ligand>
</feature>
<feature type="binding site" evidence="1">
    <location>
        <position position="119"/>
    </location>
    <ligand>
        <name>Zn(2+)</name>
        <dbReference type="ChEBI" id="CHEBI:29105"/>
        <note>ligand shared between dimeric partners</note>
    </ligand>
</feature>
<dbReference type="EC" id="3.5.4.19" evidence="1"/>
<dbReference type="EMBL" id="CP000738">
    <property type="protein sequence ID" value="ABR59901.1"/>
    <property type="molecule type" value="Genomic_DNA"/>
</dbReference>
<dbReference type="RefSeq" id="YP_001326736.1">
    <property type="nucleotide sequence ID" value="NC_009636.1"/>
</dbReference>
<dbReference type="SMR" id="A6U8C1"/>
<dbReference type="STRING" id="366394.Smed_1048"/>
<dbReference type="KEGG" id="smd:Smed_1048"/>
<dbReference type="PATRIC" id="fig|366394.8.peg.4171"/>
<dbReference type="eggNOG" id="COG0139">
    <property type="taxonomic scope" value="Bacteria"/>
</dbReference>
<dbReference type="HOGENOM" id="CLU_048577_5_0_5"/>
<dbReference type="OrthoDB" id="9795769at2"/>
<dbReference type="UniPathway" id="UPA00031">
    <property type="reaction ID" value="UER00008"/>
</dbReference>
<dbReference type="Proteomes" id="UP000001108">
    <property type="component" value="Chromosome"/>
</dbReference>
<dbReference type="GO" id="GO:0005737">
    <property type="term" value="C:cytoplasm"/>
    <property type="evidence" value="ECO:0007669"/>
    <property type="project" value="UniProtKB-SubCell"/>
</dbReference>
<dbReference type="GO" id="GO:0000287">
    <property type="term" value="F:magnesium ion binding"/>
    <property type="evidence" value="ECO:0007669"/>
    <property type="project" value="UniProtKB-UniRule"/>
</dbReference>
<dbReference type="GO" id="GO:0004635">
    <property type="term" value="F:phosphoribosyl-AMP cyclohydrolase activity"/>
    <property type="evidence" value="ECO:0007669"/>
    <property type="project" value="UniProtKB-UniRule"/>
</dbReference>
<dbReference type="GO" id="GO:0008270">
    <property type="term" value="F:zinc ion binding"/>
    <property type="evidence" value="ECO:0007669"/>
    <property type="project" value="UniProtKB-UniRule"/>
</dbReference>
<dbReference type="GO" id="GO:0000105">
    <property type="term" value="P:L-histidine biosynthetic process"/>
    <property type="evidence" value="ECO:0007669"/>
    <property type="project" value="UniProtKB-UniRule"/>
</dbReference>
<dbReference type="FunFam" id="3.10.20.810:FF:000001">
    <property type="entry name" value="Histidine biosynthesis bifunctional protein HisIE"/>
    <property type="match status" value="1"/>
</dbReference>
<dbReference type="Gene3D" id="4.10.80.70">
    <property type="match status" value="1"/>
</dbReference>
<dbReference type="Gene3D" id="3.10.20.810">
    <property type="entry name" value="Phosphoribosyl-AMP cyclohydrolase"/>
    <property type="match status" value="1"/>
</dbReference>
<dbReference type="HAMAP" id="MF_01021">
    <property type="entry name" value="HisI"/>
    <property type="match status" value="1"/>
</dbReference>
<dbReference type="InterPro" id="IPR026660">
    <property type="entry name" value="PRA-CH"/>
</dbReference>
<dbReference type="InterPro" id="IPR002496">
    <property type="entry name" value="PRib_AMP_CycHydrolase_dom"/>
</dbReference>
<dbReference type="InterPro" id="IPR038019">
    <property type="entry name" value="PRib_AMP_CycHydrolase_sf"/>
</dbReference>
<dbReference type="NCBIfam" id="NF000768">
    <property type="entry name" value="PRK00051.1"/>
    <property type="match status" value="1"/>
</dbReference>
<dbReference type="PANTHER" id="PTHR42945">
    <property type="entry name" value="HISTIDINE BIOSYNTHESIS BIFUNCTIONAL PROTEIN"/>
    <property type="match status" value="1"/>
</dbReference>
<dbReference type="PANTHER" id="PTHR42945:SF1">
    <property type="entry name" value="HISTIDINE BIOSYNTHESIS BIFUNCTIONAL PROTEIN HIS7"/>
    <property type="match status" value="1"/>
</dbReference>
<dbReference type="Pfam" id="PF01502">
    <property type="entry name" value="PRA-CH"/>
    <property type="match status" value="1"/>
</dbReference>
<dbReference type="SUPFAM" id="SSF141734">
    <property type="entry name" value="HisI-like"/>
    <property type="match status" value="1"/>
</dbReference>
<name>HIS3_SINMW</name>
<evidence type="ECO:0000255" key="1">
    <source>
        <dbReference type="HAMAP-Rule" id="MF_01021"/>
    </source>
</evidence>
<evidence type="ECO:0000256" key="2">
    <source>
        <dbReference type="SAM" id="MobiDB-lite"/>
    </source>
</evidence>
<accession>A6U8C1</accession>
<proteinExistence type="inferred from homology"/>
<organism>
    <name type="scientific">Sinorhizobium medicae (strain WSM419)</name>
    <name type="common">Ensifer medicae</name>
    <dbReference type="NCBI Taxonomy" id="366394"/>
    <lineage>
        <taxon>Bacteria</taxon>
        <taxon>Pseudomonadati</taxon>
        <taxon>Pseudomonadota</taxon>
        <taxon>Alphaproteobacteria</taxon>
        <taxon>Hyphomicrobiales</taxon>
        <taxon>Rhizobiaceae</taxon>
        <taxon>Sinorhizobium/Ensifer group</taxon>
        <taxon>Sinorhizobium</taxon>
    </lineage>
</organism>